<keyword id="KW-0342">GTP-binding</keyword>
<keyword id="KW-0396">Initiation factor</keyword>
<keyword id="KW-0547">Nucleotide-binding</keyword>
<keyword id="KW-0648">Protein biosynthesis</keyword>
<keyword id="KW-1185">Reference proteome</keyword>
<dbReference type="EMBL" id="BX950229">
    <property type="protein sequence ID" value="CAF29840.1"/>
    <property type="molecule type" value="Genomic_DNA"/>
</dbReference>
<dbReference type="RefSeq" id="WP_011170228.1">
    <property type="nucleotide sequence ID" value="NC_005791.1"/>
</dbReference>
<dbReference type="SMR" id="Q6M0I6"/>
<dbReference type="STRING" id="267377.MMP0284"/>
<dbReference type="EnsemblBacteria" id="CAF29840">
    <property type="protein sequence ID" value="CAF29840"/>
    <property type="gene ID" value="MMP0284"/>
</dbReference>
<dbReference type="GeneID" id="2761887"/>
<dbReference type="GeneID" id="36101864"/>
<dbReference type="KEGG" id="mmp:MMP0284"/>
<dbReference type="PATRIC" id="fig|267377.15.peg.287"/>
<dbReference type="eggNOG" id="arCOG01560">
    <property type="taxonomic scope" value="Archaea"/>
</dbReference>
<dbReference type="HOGENOM" id="CLU_002656_3_3_2"/>
<dbReference type="OrthoDB" id="30957at2157"/>
<dbReference type="Proteomes" id="UP000000590">
    <property type="component" value="Chromosome"/>
</dbReference>
<dbReference type="GO" id="GO:0005737">
    <property type="term" value="C:cytoplasm"/>
    <property type="evidence" value="ECO:0007669"/>
    <property type="project" value="TreeGrafter"/>
</dbReference>
<dbReference type="GO" id="GO:0005525">
    <property type="term" value="F:GTP binding"/>
    <property type="evidence" value="ECO:0007669"/>
    <property type="project" value="UniProtKB-KW"/>
</dbReference>
<dbReference type="GO" id="GO:0003924">
    <property type="term" value="F:GTPase activity"/>
    <property type="evidence" value="ECO:0007669"/>
    <property type="project" value="UniProtKB-UniRule"/>
</dbReference>
<dbReference type="GO" id="GO:0003743">
    <property type="term" value="F:translation initiation factor activity"/>
    <property type="evidence" value="ECO:0007669"/>
    <property type="project" value="UniProtKB-UniRule"/>
</dbReference>
<dbReference type="CDD" id="cd03703">
    <property type="entry name" value="aeIF5B_II"/>
    <property type="match status" value="1"/>
</dbReference>
<dbReference type="CDD" id="cd16266">
    <property type="entry name" value="IF2_aeIF5B_IV"/>
    <property type="match status" value="1"/>
</dbReference>
<dbReference type="CDD" id="cd01887">
    <property type="entry name" value="IF2_eIF5B"/>
    <property type="match status" value="1"/>
</dbReference>
<dbReference type="FunFam" id="3.40.50.300:FF:000112">
    <property type="entry name" value="Eukaryotic translation initiation factor 5B"/>
    <property type="match status" value="1"/>
</dbReference>
<dbReference type="FunFam" id="3.40.50.10050:FF:000001">
    <property type="entry name" value="Translation initiation factor IF-2"/>
    <property type="match status" value="1"/>
</dbReference>
<dbReference type="Gene3D" id="3.40.50.300">
    <property type="entry name" value="P-loop containing nucleotide triphosphate hydrolases"/>
    <property type="match status" value="1"/>
</dbReference>
<dbReference type="Gene3D" id="2.40.30.10">
    <property type="entry name" value="Translation factors"/>
    <property type="match status" value="2"/>
</dbReference>
<dbReference type="Gene3D" id="3.40.50.10050">
    <property type="entry name" value="Translation initiation factor IF- 2, domain 3"/>
    <property type="match status" value="1"/>
</dbReference>
<dbReference type="HAMAP" id="MF_00100_A">
    <property type="entry name" value="IF_2_A"/>
    <property type="match status" value="1"/>
</dbReference>
<dbReference type="InterPro" id="IPR029459">
    <property type="entry name" value="EFTU-type"/>
</dbReference>
<dbReference type="InterPro" id="IPR027417">
    <property type="entry name" value="P-loop_NTPase"/>
</dbReference>
<dbReference type="InterPro" id="IPR005225">
    <property type="entry name" value="Small_GTP-bd"/>
</dbReference>
<dbReference type="InterPro" id="IPR000795">
    <property type="entry name" value="T_Tr_GTP-bd_dom"/>
</dbReference>
<dbReference type="InterPro" id="IPR004544">
    <property type="entry name" value="TF_aIF-2_arc"/>
</dbReference>
<dbReference type="InterPro" id="IPR015760">
    <property type="entry name" value="TIF_IF2"/>
</dbReference>
<dbReference type="InterPro" id="IPR023115">
    <property type="entry name" value="TIF_IF2_dom3"/>
</dbReference>
<dbReference type="InterPro" id="IPR036925">
    <property type="entry name" value="TIF_IF2_dom3_sf"/>
</dbReference>
<dbReference type="InterPro" id="IPR009000">
    <property type="entry name" value="Transl_B-barrel_sf"/>
</dbReference>
<dbReference type="NCBIfam" id="TIGR00491">
    <property type="entry name" value="aIF-2"/>
    <property type="match status" value="1"/>
</dbReference>
<dbReference type="NCBIfam" id="NF003078">
    <property type="entry name" value="PRK04004.1"/>
    <property type="match status" value="1"/>
</dbReference>
<dbReference type="NCBIfam" id="NF011418">
    <property type="entry name" value="PRK14845.1"/>
    <property type="match status" value="1"/>
</dbReference>
<dbReference type="NCBIfam" id="TIGR00231">
    <property type="entry name" value="small_GTP"/>
    <property type="match status" value="1"/>
</dbReference>
<dbReference type="PANTHER" id="PTHR43381:SF4">
    <property type="entry name" value="EUKARYOTIC TRANSLATION INITIATION FACTOR 5B"/>
    <property type="match status" value="1"/>
</dbReference>
<dbReference type="PANTHER" id="PTHR43381">
    <property type="entry name" value="TRANSLATION INITIATION FACTOR IF-2-RELATED"/>
    <property type="match status" value="1"/>
</dbReference>
<dbReference type="Pfam" id="PF00009">
    <property type="entry name" value="GTP_EFTU"/>
    <property type="match status" value="1"/>
</dbReference>
<dbReference type="Pfam" id="PF14578">
    <property type="entry name" value="GTP_EFTU_D4"/>
    <property type="match status" value="1"/>
</dbReference>
<dbReference type="Pfam" id="PF11987">
    <property type="entry name" value="IF-2"/>
    <property type="match status" value="1"/>
</dbReference>
<dbReference type="PRINTS" id="PR00315">
    <property type="entry name" value="ELONGATNFCT"/>
</dbReference>
<dbReference type="SUPFAM" id="SSF52156">
    <property type="entry name" value="Initiation factor IF2/eIF5b, domain 3"/>
    <property type="match status" value="1"/>
</dbReference>
<dbReference type="SUPFAM" id="SSF52540">
    <property type="entry name" value="P-loop containing nucleoside triphosphate hydrolases"/>
    <property type="match status" value="1"/>
</dbReference>
<dbReference type="SUPFAM" id="SSF50447">
    <property type="entry name" value="Translation proteins"/>
    <property type="match status" value="1"/>
</dbReference>
<dbReference type="PROSITE" id="PS51722">
    <property type="entry name" value="G_TR_2"/>
    <property type="match status" value="1"/>
</dbReference>
<protein>
    <recommendedName>
        <fullName evidence="2">Probable translation initiation factor IF-2</fullName>
    </recommendedName>
</protein>
<reference key="1">
    <citation type="journal article" date="2004" name="J. Bacteriol.">
        <title>Complete genome sequence of the genetically tractable hydrogenotrophic methanogen Methanococcus maripaludis.</title>
        <authorList>
            <person name="Hendrickson E.L."/>
            <person name="Kaul R."/>
            <person name="Zhou Y."/>
            <person name="Bovee D."/>
            <person name="Chapman P."/>
            <person name="Chung J."/>
            <person name="Conway de Macario E."/>
            <person name="Dodsworth J.A."/>
            <person name="Gillett W."/>
            <person name="Graham D.E."/>
            <person name="Hackett M."/>
            <person name="Haydock A.K."/>
            <person name="Kang A."/>
            <person name="Land M.L."/>
            <person name="Levy R."/>
            <person name="Lie T.J."/>
            <person name="Major T.A."/>
            <person name="Moore B.C."/>
            <person name="Porat I."/>
            <person name="Palmeiri A."/>
            <person name="Rouse G."/>
            <person name="Saenphimmachak C."/>
            <person name="Soell D."/>
            <person name="Van Dien S."/>
            <person name="Wang T."/>
            <person name="Whitman W.B."/>
            <person name="Xia Q."/>
            <person name="Zhang Y."/>
            <person name="Larimer F.W."/>
            <person name="Olson M.V."/>
            <person name="Leigh J.A."/>
        </authorList>
    </citation>
    <scope>NUCLEOTIDE SEQUENCE [LARGE SCALE GENOMIC DNA]</scope>
    <source>
        <strain>DSM 14266 / JCM 13030 / NBRC 101832 / S2 / LL</strain>
    </source>
</reference>
<gene>
    <name evidence="2" type="primary">infB</name>
    <name type="ordered locus">MMP0284</name>
</gene>
<evidence type="ECO:0000250" key="1"/>
<evidence type="ECO:0000255" key="2">
    <source>
        <dbReference type="HAMAP-Rule" id="MF_00100"/>
    </source>
</evidence>
<name>IF2P_METMP</name>
<accession>Q6M0I6</accession>
<sequence>MALRCPIVSVLGHVDHGKTSLLDKIRRTRVTQREAGGITQHIGASEIPINTIKKVSKDLLGLFKADLSIPGILVIDTPGHEAFTSLRKRGGALADIAILVVDINEGFKPQTIEAINILKQCKTPFVVAANKVDRIPGWNSSEGPFILNFNEKNQHPNAMTEFEIRLYENVIKHLNELGFDADLFSRVKDTTKTINVVPVSAMTGEGVPDLLVIISGLAQRFLEQKLALNVEGYAKGTVLELKEEKGLGKTIDAIIYDGIAKTGDFLVVGNPDGVLVSKIKALLKPKELDEMRDPKDKFKPSKQISAATGVKISAPDLDSVIAGSPLRIVPKNQVEAAKEEVLEEVEEFTILTDDEGIIIKADTMGSLEALANELRKVNAKIKKAEVGDISKKDVIEASSYASTNPLNGLIISFNTKVLADAKAEIEKSDVKLLEGKIIYKLVEEHEEWTKEMEELMKSDEINRLTKPAMIKILPNCIFRQKEPAVCGVEVLYGTLKIGSPIMSEDGKKLGYVKEMRDNQQENIKEAKVGMQVPVSIDGNIVLGRNAKENDILYVEVPEPEARKLHHEFKDELRGDEKEALSRYMELKQKIENNIFWGM</sequence>
<comment type="function">
    <text evidence="2">Function in general translation initiation by promoting the binding of the formylmethionine-tRNA to ribosomes. Seems to function along with eIF-2.</text>
</comment>
<comment type="similarity">
    <text evidence="2">Belongs to the TRAFAC class translation factor GTPase superfamily. Classic translation factor GTPase family. IF-2 subfamily.</text>
</comment>
<proteinExistence type="inferred from homology"/>
<feature type="chain" id="PRO_0000137304" description="Probable translation initiation factor IF-2">
    <location>
        <begin position="1"/>
        <end position="598"/>
    </location>
</feature>
<feature type="domain" description="tr-type G">
    <location>
        <begin position="3"/>
        <end position="225"/>
    </location>
</feature>
<feature type="region of interest" description="G1" evidence="1">
    <location>
        <begin position="12"/>
        <end position="19"/>
    </location>
</feature>
<feature type="region of interest" description="G2" evidence="1">
    <location>
        <begin position="37"/>
        <end position="41"/>
    </location>
</feature>
<feature type="region of interest" description="G3" evidence="1">
    <location>
        <begin position="76"/>
        <end position="79"/>
    </location>
</feature>
<feature type="region of interest" description="G4" evidence="1">
    <location>
        <begin position="130"/>
        <end position="133"/>
    </location>
</feature>
<feature type="region of interest" description="G5" evidence="1">
    <location>
        <begin position="200"/>
        <end position="202"/>
    </location>
</feature>
<feature type="binding site" evidence="2">
    <location>
        <begin position="12"/>
        <end position="19"/>
    </location>
    <ligand>
        <name>GTP</name>
        <dbReference type="ChEBI" id="CHEBI:37565"/>
    </ligand>
</feature>
<feature type="binding site" evidence="2">
    <location>
        <begin position="76"/>
        <end position="80"/>
    </location>
    <ligand>
        <name>GTP</name>
        <dbReference type="ChEBI" id="CHEBI:37565"/>
    </ligand>
</feature>
<feature type="binding site" evidence="2">
    <location>
        <begin position="130"/>
        <end position="133"/>
    </location>
    <ligand>
        <name>GTP</name>
        <dbReference type="ChEBI" id="CHEBI:37565"/>
    </ligand>
</feature>
<organism>
    <name type="scientific">Methanococcus maripaludis (strain DSM 14266 / JCM 13030 / NBRC 101832 / S2 / LL)</name>
    <dbReference type="NCBI Taxonomy" id="267377"/>
    <lineage>
        <taxon>Archaea</taxon>
        <taxon>Methanobacteriati</taxon>
        <taxon>Methanobacteriota</taxon>
        <taxon>Methanomada group</taxon>
        <taxon>Methanococci</taxon>
        <taxon>Methanococcales</taxon>
        <taxon>Methanococcaceae</taxon>
        <taxon>Methanococcus</taxon>
    </lineage>
</organism>